<comment type="function">
    <text>May act as a GTPase-activating protein for Rab family protein(s).</text>
</comment>
<organism>
    <name type="scientific">Xenopus laevis</name>
    <name type="common">African clawed frog</name>
    <dbReference type="NCBI Taxonomy" id="8355"/>
    <lineage>
        <taxon>Eukaryota</taxon>
        <taxon>Metazoa</taxon>
        <taxon>Chordata</taxon>
        <taxon>Craniata</taxon>
        <taxon>Vertebrata</taxon>
        <taxon>Euteleostomi</taxon>
        <taxon>Amphibia</taxon>
        <taxon>Batrachia</taxon>
        <taxon>Anura</taxon>
        <taxon>Pipoidea</taxon>
        <taxon>Pipidae</taxon>
        <taxon>Xenopodinae</taxon>
        <taxon>Xenopus</taxon>
        <taxon>Xenopus</taxon>
    </lineage>
</organism>
<proteinExistence type="evidence at transcript level"/>
<protein>
    <recommendedName>
        <fullName>Growth hormone-regulated TBC protein 1</fullName>
    </recommendedName>
</protein>
<name>GRTP1_XENLA</name>
<sequence length="342" mass="39678">MDEANQIAKDSVPRIDAYGFIRPVEFDYAVYEEFIARYRVVLTRRALKWSKLLQQSAAVEKSIKVKRYIRKGIPNEHRSHVWMVVSGAQAQMGMNTGYFRRMFIEGEKNPKLLDLVNTDLNRTFPDNVQFRKNSNPSLQKHLYNVLVAYGQHNTTVGYCQGMNFIAGYLILVTKDEEKAFWLMDALIGRILPDYYSPAMTGLKTDQEVLGDLVKKKLPAVSQLIEAHGVMWTLLVSRWFICLFIDILPVETVLRIWDCLFFEGSKVLFRVALTLIKQYQAFILEARNFPDICDKFKEITKGEFVTDCHYFMQKIFAEPGSLSKTTIDKLREKQRLQLASEEK</sequence>
<reference key="1">
    <citation type="submission" date="2004-06" db="EMBL/GenBank/DDBJ databases">
        <authorList>
            <consortium name="NIH - Xenopus Gene Collection (XGC) project"/>
        </authorList>
    </citation>
    <scope>NUCLEOTIDE SEQUENCE [LARGE SCALE MRNA]</scope>
    <source>
        <tissue>Brain</tissue>
    </source>
</reference>
<gene>
    <name type="primary">grtp1</name>
</gene>
<keyword id="KW-0343">GTPase activation</keyword>
<keyword id="KW-1185">Reference proteome</keyword>
<dbReference type="EMBL" id="BC074303">
    <property type="protein sequence ID" value="AAH74303.1"/>
    <property type="molecule type" value="mRNA"/>
</dbReference>
<dbReference type="RefSeq" id="NP_001086187.1">
    <property type="nucleotide sequence ID" value="NM_001092718.1"/>
</dbReference>
<dbReference type="SMR" id="Q6GLZ0"/>
<dbReference type="DNASU" id="444616"/>
<dbReference type="GeneID" id="444616"/>
<dbReference type="KEGG" id="xla:444616"/>
<dbReference type="AGR" id="Xenbase:XB-GENE-950231"/>
<dbReference type="CTD" id="444616"/>
<dbReference type="Xenbase" id="XB-GENE-950231">
    <property type="gene designation" value="grtp1.S"/>
</dbReference>
<dbReference type="OrthoDB" id="294251at2759"/>
<dbReference type="Proteomes" id="UP000186698">
    <property type="component" value="Chromosome 2S"/>
</dbReference>
<dbReference type="Bgee" id="444616">
    <property type="expression patterns" value="Expressed in camera-type eye and 18 other cell types or tissues"/>
</dbReference>
<dbReference type="GO" id="GO:0005096">
    <property type="term" value="F:GTPase activator activity"/>
    <property type="evidence" value="ECO:0000318"/>
    <property type="project" value="GO_Central"/>
</dbReference>
<dbReference type="GO" id="GO:0031267">
    <property type="term" value="F:small GTPase binding"/>
    <property type="evidence" value="ECO:0000318"/>
    <property type="project" value="GO_Central"/>
</dbReference>
<dbReference type="FunFam" id="1.10.10.750:FF:000014">
    <property type="entry name" value="Growth hormone-regulated TBC protein 1"/>
    <property type="match status" value="1"/>
</dbReference>
<dbReference type="FunFam" id="1.10.472.80:FF:000029">
    <property type="entry name" value="Growth hormone-regulated TBC protein 1"/>
    <property type="match status" value="1"/>
</dbReference>
<dbReference type="FunFam" id="1.10.8.270:FF:000016">
    <property type="entry name" value="TBC1 domain family member 2A"/>
    <property type="match status" value="1"/>
</dbReference>
<dbReference type="Gene3D" id="1.10.8.270">
    <property type="entry name" value="putative rabgap domain of human tbc1 domain family member 14 like domains"/>
    <property type="match status" value="1"/>
</dbReference>
<dbReference type="Gene3D" id="1.10.10.750">
    <property type="entry name" value="Ypt/Rab-GAP domain of gyp1p, domain 1"/>
    <property type="match status" value="1"/>
</dbReference>
<dbReference type="Gene3D" id="1.10.472.80">
    <property type="entry name" value="Ypt/Rab-GAP domain of gyp1p, domain 3"/>
    <property type="match status" value="1"/>
</dbReference>
<dbReference type="InterPro" id="IPR000195">
    <property type="entry name" value="Rab-GAP-TBC_dom"/>
</dbReference>
<dbReference type="InterPro" id="IPR035969">
    <property type="entry name" value="Rab-GAP_TBC_sf"/>
</dbReference>
<dbReference type="InterPro" id="IPR050302">
    <property type="entry name" value="Rab_GAP_TBC_domain"/>
</dbReference>
<dbReference type="PANTHER" id="PTHR47219:SF10">
    <property type="entry name" value="GROWTH HORMONE-REGULATED TBC PROTEIN 1"/>
    <property type="match status" value="1"/>
</dbReference>
<dbReference type="PANTHER" id="PTHR47219">
    <property type="entry name" value="RAB GTPASE-ACTIVATING PROTEIN 1-LIKE"/>
    <property type="match status" value="1"/>
</dbReference>
<dbReference type="Pfam" id="PF00566">
    <property type="entry name" value="RabGAP-TBC"/>
    <property type="match status" value="1"/>
</dbReference>
<dbReference type="SMART" id="SM00164">
    <property type="entry name" value="TBC"/>
    <property type="match status" value="1"/>
</dbReference>
<dbReference type="SUPFAM" id="SSF47923">
    <property type="entry name" value="Ypt/Rab-GAP domain of gyp1p"/>
    <property type="match status" value="2"/>
</dbReference>
<dbReference type="PROSITE" id="PS50086">
    <property type="entry name" value="TBC_RABGAP"/>
    <property type="match status" value="1"/>
</dbReference>
<evidence type="ECO:0000255" key="1">
    <source>
        <dbReference type="PROSITE-ProRule" id="PRU00163"/>
    </source>
</evidence>
<accession>Q6GLZ0</accession>
<feature type="chain" id="PRO_0000288712" description="Growth hormone-regulated TBC protein 1">
    <location>
        <begin position="1"/>
        <end position="342"/>
    </location>
</feature>
<feature type="domain" description="Rab-GAP TBC" evidence="1">
    <location>
        <begin position="72"/>
        <end position="263"/>
    </location>
</feature>